<proteinExistence type="evidence at protein level"/>
<keyword id="KW-0002">3D-structure</keyword>
<keyword id="KW-0167">Capsid protein</keyword>
<keyword id="KW-0903">Direct protein sequencing</keyword>
<keyword id="KW-1139">Helical capsid protein</keyword>
<keyword id="KW-0946">Virion</keyword>
<name>CAPSD_TMGMV</name>
<gene>
    <name type="primary">CP</name>
</gene>
<dbReference type="EMBL" id="M34077">
    <property type="protein sequence ID" value="AAA47937.1"/>
    <property type="molecule type" value="Genomic_RNA"/>
</dbReference>
<dbReference type="EMBL" id="M34236">
    <property type="protein sequence ID" value="AAA47939.1"/>
    <property type="molecule type" value="Genomic_RNA"/>
</dbReference>
<dbReference type="EMBL" id="AF132907">
    <property type="protein sequence ID" value="AAD41791.1"/>
    <property type="molecule type" value="Genomic_RNA"/>
</dbReference>
<dbReference type="PIR" id="C35520">
    <property type="entry name" value="VCTMUT"/>
</dbReference>
<dbReference type="RefSeq" id="NP_062916.1">
    <property type="nucleotide sequence ID" value="NC_001556.1"/>
</dbReference>
<dbReference type="PDB" id="1VTM">
    <property type="method" value="Fiber"/>
    <property type="resolution" value="3.50 A"/>
    <property type="chains" value="P=2-159"/>
</dbReference>
<dbReference type="PDBsum" id="1VTM"/>
<dbReference type="SMR" id="P03579"/>
<dbReference type="KEGG" id="vg:1494073"/>
<dbReference type="OrthoDB" id="12635at10239"/>
<dbReference type="EvolutionaryTrace" id="P03579"/>
<dbReference type="Proteomes" id="UP000000281">
    <property type="component" value="Genome"/>
</dbReference>
<dbReference type="GO" id="GO:0019029">
    <property type="term" value="C:helical viral capsid"/>
    <property type="evidence" value="ECO:0007669"/>
    <property type="project" value="UniProtKB-KW"/>
</dbReference>
<dbReference type="GO" id="GO:0005198">
    <property type="term" value="F:structural molecule activity"/>
    <property type="evidence" value="ECO:0007669"/>
    <property type="project" value="InterPro"/>
</dbReference>
<dbReference type="Gene3D" id="1.20.120.70">
    <property type="entry name" value="Tobacco mosaic virus-like, coat protein"/>
    <property type="match status" value="1"/>
</dbReference>
<dbReference type="InterPro" id="IPR001337">
    <property type="entry name" value="TMV-like_coat"/>
</dbReference>
<dbReference type="InterPro" id="IPR036417">
    <property type="entry name" value="TMV-like_coat_sf"/>
</dbReference>
<dbReference type="Pfam" id="PF00721">
    <property type="entry name" value="TMV_coat"/>
    <property type="match status" value="1"/>
</dbReference>
<dbReference type="SUPFAM" id="SSF47195">
    <property type="entry name" value="TMV-like viral coat proteins"/>
    <property type="match status" value="1"/>
</dbReference>
<accession>P03579</accession>
<reference key="1">
    <citation type="journal article" date="1990" name="Virology">
        <title>The complete nucleotide sequence of the genomic RNA of the tobamovirus tobacco mild green mosaic virus.</title>
        <authorList>
            <person name="Solis I."/>
            <person name="Garcia-Arenal F."/>
        </authorList>
    </citation>
    <scope>NUCLEOTIDE SEQUENCE [GENOMIC RNA]</scope>
</reference>
<reference key="2">
    <citation type="journal article" date="1991" name="Virology">
        <title>Transfer of the movement protein gene between two tobamoviruses: influence on local lesion development.</title>
        <authorList>
            <person name="Nejidat A."/>
            <person name="Cellier F."/>
            <person name="Holt C.A."/>
            <person name="Gafny R."/>
            <person name="Eggenberger A.L."/>
            <person name="Beachy R.N."/>
        </authorList>
    </citation>
    <scope>NUCLEOTIDE SEQUENCE [GENOMIC RNA]</scope>
    <source>
        <strain>ATCC PV-228</strain>
    </source>
</reference>
<reference key="3">
    <citation type="journal article" date="2000" name="J. Gen. Virol.">
        <title>Heterogeneity in the 3'-terminal untranslated region of tobacco mild green mosaic tobamoviruses from Nicotiana glauca resulting in variants with three or six pseudoknots.</title>
        <authorList>
            <person name="Bodaghi S."/>
            <person name="Ngon A Yassi M."/>
            <person name="Dodds J.A."/>
        </authorList>
    </citation>
    <scope>NUCLEOTIDE SEQUENCE [GENOMIC RNA]</scope>
    <source>
        <strain>TMGMVCPR-22</strain>
    </source>
</reference>
<reference key="4">
    <citation type="journal article" date="1965" name="Z. Naturforsch. B">
        <title>Primary protein structure of strains of tobacco mosaic virus. IV. Amino acid sequences (1 to 61 and 135 to 158) of proteins of tobacco mosaic virus strain U2.</title>
        <authorList>
            <person name="Wittmann H.G."/>
        </authorList>
    </citation>
    <scope>PROTEIN SEQUENCE OF 2-62 AND 136-159</scope>
</reference>
<reference key="5">
    <citation type="journal article" date="1967" name="Mol. Gen. Genet.">
        <title>Amino acid sequence and physico-chemical behavior of coat proteins of wild strain tobacco mosaic virus. I. Analysis of primary structure (pos. 62-134) of coat proteins of wild strain U2.</title>
        <authorList>
            <person name="Rentschler L."/>
        </authorList>
    </citation>
    <scope>PROTEIN SEQUENCE OF 63-135</scope>
</reference>
<reference key="6">
    <citation type="journal article" date="1992" name="J. Mol. Biol.">
        <title>Structure of the U2 strain of tobacco mosaic virus refined at 3.5-A resolution using X-ray fiber diffraction.</title>
        <authorList>
            <person name="Pattanayek R."/>
            <person name="Stubbs G."/>
        </authorList>
    </citation>
    <scope>X-RAY CRYSTALLOGRAPHY (3.5 ANGSTROMS)</scope>
</reference>
<protein>
    <recommendedName>
        <fullName>Capsid protein</fullName>
    </recommendedName>
    <alternativeName>
        <fullName>Coat protein</fullName>
    </alternativeName>
</protein>
<organism>
    <name type="scientific">Tobacco mild green mosaic virus</name>
    <name type="common">TMGMV</name>
    <name type="synonym">TMV strain U2</name>
    <dbReference type="NCBI Taxonomy" id="12241"/>
    <lineage>
        <taxon>Viruses</taxon>
        <taxon>Riboviria</taxon>
        <taxon>Orthornavirae</taxon>
        <taxon>Kitrinoviricota</taxon>
        <taxon>Alsuviricetes</taxon>
        <taxon>Martellivirales</taxon>
        <taxon>Virgaviridae</taxon>
        <taxon>Tobamovirus</taxon>
    </lineage>
</organism>
<organismHost>
    <name type="scientific">Capsicum annuum</name>
    <name type="common">Capsicum pepper</name>
    <dbReference type="NCBI Taxonomy" id="4072"/>
</organismHost>
<organismHost>
    <name type="scientific">Eryngium planum</name>
    <dbReference type="NCBI Taxonomy" id="43071"/>
</organismHost>
<organismHost>
    <name type="scientific">Nicotiana glauca</name>
    <name type="common">Glaucous tobacco</name>
    <name type="synonym">Tree tobacco</name>
    <dbReference type="NCBI Taxonomy" id="4090"/>
</organismHost>
<organismHost>
    <name type="scientific">Nicotiana tabacum</name>
    <name type="common">Common tobacco</name>
    <dbReference type="NCBI Taxonomy" id="4097"/>
</organismHost>
<feature type="initiator methionine" description="Removed; by host" evidence="1">
    <location>
        <position position="1"/>
    </location>
</feature>
<feature type="chain" id="PRO_0000144945" description="Capsid protein">
    <location>
        <begin position="2"/>
        <end position="159"/>
    </location>
</feature>
<feature type="sequence conflict" description="In Ref. 4; AA sequence." evidence="2" ref="4">
    <original>Q</original>
    <variation>E</variation>
    <location>
        <position position="23"/>
    </location>
</feature>
<feature type="sequence conflict" description="In Ref. 4; AA sequence." evidence="2" ref="4">
    <original>VPS</original>
    <variation>SPV</variation>
    <location>
        <begin position="56"/>
        <end position="58"/>
    </location>
</feature>
<feature type="sequence conflict" description="In Ref. 5; AA sequence." evidence="2" ref="5">
    <original>PAPNTTEIVNAT</original>
    <variation>ABPTTAVPIBTZ</variation>
    <location>
        <begin position="101"/>
        <end position="112"/>
    </location>
</feature>
<feature type="turn" evidence="3">
    <location>
        <begin position="8"/>
        <end position="10"/>
    </location>
</feature>
<feature type="helix" evidence="3">
    <location>
        <begin position="11"/>
        <end position="14"/>
    </location>
</feature>
<feature type="helix" evidence="3">
    <location>
        <begin position="22"/>
        <end position="24"/>
    </location>
</feature>
<feature type="helix" evidence="3">
    <location>
        <begin position="25"/>
        <end position="31"/>
    </location>
</feature>
<feature type="helix" evidence="3">
    <location>
        <begin position="39"/>
        <end position="52"/>
    </location>
</feature>
<feature type="strand" evidence="3">
    <location>
        <begin position="59"/>
        <end position="61"/>
    </location>
</feature>
<feature type="strand" evidence="3">
    <location>
        <begin position="69"/>
        <end position="74"/>
    </location>
</feature>
<feature type="helix" evidence="3">
    <location>
        <begin position="77"/>
        <end position="87"/>
    </location>
</feature>
<feature type="turn" evidence="3">
    <location>
        <begin position="98"/>
        <end position="101"/>
    </location>
</feature>
<feature type="strand" evidence="3">
    <location>
        <begin position="106"/>
        <end position="110"/>
    </location>
</feature>
<feature type="turn" evidence="3">
    <location>
        <begin position="112"/>
        <end position="116"/>
    </location>
</feature>
<feature type="helix" evidence="3">
    <location>
        <begin position="117"/>
        <end position="131"/>
    </location>
</feature>
<feature type="strand" evidence="3">
    <location>
        <begin position="133"/>
        <end position="135"/>
    </location>
</feature>
<feature type="helix" evidence="3">
    <location>
        <begin position="142"/>
        <end position="145"/>
    </location>
</feature>
<comment type="function">
    <text>Capsid protein self-assembles to form rod-shaped virions about 18 nm in diameter with a central canal enclosing the viral genomic RNA.</text>
</comment>
<comment type="subcellular location">
    <subcellularLocation>
        <location evidence="2">Virion</location>
    </subcellularLocation>
</comment>
<comment type="similarity">
    <text evidence="2">Belongs to the virgaviridae capsid protein family.</text>
</comment>
<sequence length="159" mass="17590">MPYTINSPSQFVYLSSAYADPVQLINLCTNALGNQFQTQQARTTVQQQFADAWKPVPSMTVRFPASDFYVYRYNSTLDPLITALLNSFDTRNRIIEVDNQPAPNTTEIVNATQRVDDATVAIRASINNLANELVRGTGMFNQAGFETASGLVWTTTPAT</sequence>
<evidence type="ECO:0000269" key="1">
    <source>
    </source>
</evidence>
<evidence type="ECO:0000305" key="2"/>
<evidence type="ECO:0007829" key="3">
    <source>
        <dbReference type="PDB" id="1VTM"/>
    </source>
</evidence>